<name>TYRO3_CHICK</name>
<protein>
    <recommendedName>
        <fullName>Tyrosine-protein kinase receptor TYRO3</fullName>
        <ecNumber>2.7.10.1</ecNumber>
    </recommendedName>
    <alternativeName>
        <fullName>Retina-expressed kinase</fullName>
        <shortName>Rek</shortName>
    </alternativeName>
</protein>
<proteinExistence type="evidence at protein level"/>
<evidence type="ECO:0000250" key="1"/>
<evidence type="ECO:0000255" key="2"/>
<evidence type="ECO:0000255" key="3">
    <source>
        <dbReference type="PROSITE-ProRule" id="PRU00114"/>
    </source>
</evidence>
<evidence type="ECO:0000255" key="4">
    <source>
        <dbReference type="PROSITE-ProRule" id="PRU00159"/>
    </source>
</evidence>
<evidence type="ECO:0000255" key="5">
    <source>
        <dbReference type="PROSITE-ProRule" id="PRU00316"/>
    </source>
</evidence>
<evidence type="ECO:0000255" key="6">
    <source>
        <dbReference type="PROSITE-ProRule" id="PRU10028"/>
    </source>
</evidence>
<evidence type="ECO:0000256" key="7">
    <source>
        <dbReference type="SAM" id="MobiDB-lite"/>
    </source>
</evidence>
<evidence type="ECO:0000269" key="8">
    <source>
    </source>
</evidence>
<dbReference type="EC" id="2.7.10.1"/>
<dbReference type="EMBL" id="U70045">
    <property type="protein sequence ID" value="AAC60041.1"/>
    <property type="molecule type" value="mRNA"/>
</dbReference>
<dbReference type="RefSeq" id="NP_989958.1">
    <property type="nucleotide sequence ID" value="NM_204627.2"/>
</dbReference>
<dbReference type="SMR" id="Q98949"/>
<dbReference type="BioGRID" id="675626">
    <property type="interactions" value="1"/>
</dbReference>
<dbReference type="FunCoup" id="Q98949">
    <property type="interactions" value="142"/>
</dbReference>
<dbReference type="STRING" id="9031.ENSGALP00000014051"/>
<dbReference type="GlyCosmos" id="Q98949">
    <property type="glycosylation" value="8 sites, No reported glycans"/>
</dbReference>
<dbReference type="GlyGen" id="Q98949">
    <property type="glycosylation" value="8 sites"/>
</dbReference>
<dbReference type="PaxDb" id="9031-ENSGALP00000014051"/>
<dbReference type="GeneID" id="395336"/>
<dbReference type="KEGG" id="gga:395336"/>
<dbReference type="CTD" id="558"/>
<dbReference type="VEuPathDB" id="HostDB:geneid_395336"/>
<dbReference type="eggNOG" id="ENOG502QRYR">
    <property type="taxonomic scope" value="Eukaryota"/>
</dbReference>
<dbReference type="InParanoid" id="Q98949"/>
<dbReference type="OrthoDB" id="4062651at2759"/>
<dbReference type="PhylomeDB" id="Q98949"/>
<dbReference type="PRO" id="PR:Q98949"/>
<dbReference type="Proteomes" id="UP000000539">
    <property type="component" value="Unassembled WGS sequence"/>
</dbReference>
<dbReference type="GO" id="GO:0005886">
    <property type="term" value="C:plasma membrane"/>
    <property type="evidence" value="ECO:0000318"/>
    <property type="project" value="GO_Central"/>
</dbReference>
<dbReference type="GO" id="GO:0043235">
    <property type="term" value="C:receptor complex"/>
    <property type="evidence" value="ECO:0000318"/>
    <property type="project" value="GO_Central"/>
</dbReference>
<dbReference type="GO" id="GO:0005524">
    <property type="term" value="F:ATP binding"/>
    <property type="evidence" value="ECO:0007669"/>
    <property type="project" value="UniProtKB-KW"/>
</dbReference>
<dbReference type="GO" id="GO:0004714">
    <property type="term" value="F:transmembrane receptor protein tyrosine kinase activity"/>
    <property type="evidence" value="ECO:0000318"/>
    <property type="project" value="GO_Central"/>
</dbReference>
<dbReference type="GO" id="GO:0007155">
    <property type="term" value="P:cell adhesion"/>
    <property type="evidence" value="ECO:0007669"/>
    <property type="project" value="UniProtKB-KW"/>
</dbReference>
<dbReference type="GO" id="GO:0016477">
    <property type="term" value="P:cell migration"/>
    <property type="evidence" value="ECO:0000318"/>
    <property type="project" value="GO_Central"/>
</dbReference>
<dbReference type="GO" id="GO:0007169">
    <property type="term" value="P:cell surface receptor protein tyrosine kinase signaling pathway"/>
    <property type="evidence" value="ECO:0000318"/>
    <property type="project" value="GO_Central"/>
</dbReference>
<dbReference type="GO" id="GO:0007399">
    <property type="term" value="P:nervous system development"/>
    <property type="evidence" value="ECO:0000318"/>
    <property type="project" value="GO_Central"/>
</dbReference>
<dbReference type="GO" id="GO:0006909">
    <property type="term" value="P:phagocytosis"/>
    <property type="evidence" value="ECO:0000318"/>
    <property type="project" value="GO_Central"/>
</dbReference>
<dbReference type="CDD" id="cd00063">
    <property type="entry name" value="FN3"/>
    <property type="match status" value="2"/>
</dbReference>
<dbReference type="CDD" id="cd05749">
    <property type="entry name" value="IgI_2_Axl_Tyro3_like"/>
    <property type="match status" value="1"/>
</dbReference>
<dbReference type="CDD" id="cd05074">
    <property type="entry name" value="PTKc_Tyro3"/>
    <property type="match status" value="1"/>
</dbReference>
<dbReference type="FunFam" id="1.10.510.10:FF:000089">
    <property type="entry name" value="Tyrosine-protein kinase receptor TYRO3"/>
    <property type="match status" value="1"/>
</dbReference>
<dbReference type="FunFam" id="2.60.40.10:FF:000296">
    <property type="entry name" value="Tyrosine-protein kinase receptor TYRO3"/>
    <property type="match status" value="1"/>
</dbReference>
<dbReference type="FunFam" id="2.60.40.10:FF:000484">
    <property type="entry name" value="Tyrosine-protein kinase receptor TYRO3"/>
    <property type="match status" value="1"/>
</dbReference>
<dbReference type="FunFam" id="2.60.40.10:FF:000605">
    <property type="entry name" value="Tyrosine-protein kinase receptor TYRO3"/>
    <property type="match status" value="1"/>
</dbReference>
<dbReference type="FunFam" id="2.60.40.10:FF:001653">
    <property type="entry name" value="Tyrosine-protein kinase receptor TYRO3"/>
    <property type="match status" value="1"/>
</dbReference>
<dbReference type="FunFam" id="3.30.200.20:FF:000111">
    <property type="entry name" value="Tyrosine-protein kinase receptor TYRO3"/>
    <property type="match status" value="1"/>
</dbReference>
<dbReference type="Gene3D" id="2.60.40.10">
    <property type="entry name" value="Immunoglobulins"/>
    <property type="match status" value="4"/>
</dbReference>
<dbReference type="Gene3D" id="3.30.200.20">
    <property type="entry name" value="Phosphorylase Kinase, domain 1"/>
    <property type="match status" value="1"/>
</dbReference>
<dbReference type="Gene3D" id="1.10.510.10">
    <property type="entry name" value="Transferase(Phosphotransferase) domain 1"/>
    <property type="match status" value="1"/>
</dbReference>
<dbReference type="InterPro" id="IPR003961">
    <property type="entry name" value="FN3_dom"/>
</dbReference>
<dbReference type="InterPro" id="IPR036116">
    <property type="entry name" value="FN3_sf"/>
</dbReference>
<dbReference type="InterPro" id="IPR007110">
    <property type="entry name" value="Ig-like_dom"/>
</dbReference>
<dbReference type="InterPro" id="IPR036179">
    <property type="entry name" value="Ig-like_dom_sf"/>
</dbReference>
<dbReference type="InterPro" id="IPR013783">
    <property type="entry name" value="Ig-like_fold"/>
</dbReference>
<dbReference type="InterPro" id="IPR013098">
    <property type="entry name" value="Ig_I-set"/>
</dbReference>
<dbReference type="InterPro" id="IPR003599">
    <property type="entry name" value="Ig_sub"/>
</dbReference>
<dbReference type="InterPro" id="IPR003598">
    <property type="entry name" value="Ig_sub2"/>
</dbReference>
<dbReference type="InterPro" id="IPR011009">
    <property type="entry name" value="Kinase-like_dom_sf"/>
</dbReference>
<dbReference type="InterPro" id="IPR000719">
    <property type="entry name" value="Prot_kinase_dom"/>
</dbReference>
<dbReference type="InterPro" id="IPR017441">
    <property type="entry name" value="Protein_kinase_ATP_BS"/>
</dbReference>
<dbReference type="InterPro" id="IPR050122">
    <property type="entry name" value="RTK"/>
</dbReference>
<dbReference type="InterPro" id="IPR001245">
    <property type="entry name" value="Ser-Thr/Tyr_kinase_cat_dom"/>
</dbReference>
<dbReference type="InterPro" id="IPR008266">
    <property type="entry name" value="Tyr_kinase_AS"/>
</dbReference>
<dbReference type="InterPro" id="IPR020635">
    <property type="entry name" value="Tyr_kinase_cat_dom"/>
</dbReference>
<dbReference type="PANTHER" id="PTHR24416">
    <property type="entry name" value="TYROSINE-PROTEIN KINASE RECEPTOR"/>
    <property type="match status" value="1"/>
</dbReference>
<dbReference type="PANTHER" id="PTHR24416:SF279">
    <property type="entry name" value="TYROSINE-PROTEIN KINASE RECEPTOR TYRO3"/>
    <property type="match status" value="1"/>
</dbReference>
<dbReference type="Pfam" id="PF00041">
    <property type="entry name" value="fn3"/>
    <property type="match status" value="1"/>
</dbReference>
<dbReference type="Pfam" id="PF07679">
    <property type="entry name" value="I-set"/>
    <property type="match status" value="1"/>
</dbReference>
<dbReference type="Pfam" id="PF07714">
    <property type="entry name" value="PK_Tyr_Ser-Thr"/>
    <property type="match status" value="1"/>
</dbReference>
<dbReference type="PIRSF" id="PIRSF000615">
    <property type="entry name" value="TyrPK_CSF1-R"/>
    <property type="match status" value="1"/>
</dbReference>
<dbReference type="PRINTS" id="PR00109">
    <property type="entry name" value="TYRKINASE"/>
</dbReference>
<dbReference type="SMART" id="SM00060">
    <property type="entry name" value="FN3"/>
    <property type="match status" value="2"/>
</dbReference>
<dbReference type="SMART" id="SM00409">
    <property type="entry name" value="IG"/>
    <property type="match status" value="2"/>
</dbReference>
<dbReference type="SMART" id="SM00408">
    <property type="entry name" value="IGc2"/>
    <property type="match status" value="1"/>
</dbReference>
<dbReference type="SMART" id="SM00219">
    <property type="entry name" value="TyrKc"/>
    <property type="match status" value="1"/>
</dbReference>
<dbReference type="SUPFAM" id="SSF49265">
    <property type="entry name" value="Fibronectin type III"/>
    <property type="match status" value="1"/>
</dbReference>
<dbReference type="SUPFAM" id="SSF48726">
    <property type="entry name" value="Immunoglobulin"/>
    <property type="match status" value="2"/>
</dbReference>
<dbReference type="SUPFAM" id="SSF56112">
    <property type="entry name" value="Protein kinase-like (PK-like)"/>
    <property type="match status" value="1"/>
</dbReference>
<dbReference type="PROSITE" id="PS50853">
    <property type="entry name" value="FN3"/>
    <property type="match status" value="2"/>
</dbReference>
<dbReference type="PROSITE" id="PS50835">
    <property type="entry name" value="IG_LIKE"/>
    <property type="match status" value="2"/>
</dbReference>
<dbReference type="PROSITE" id="PS00107">
    <property type="entry name" value="PROTEIN_KINASE_ATP"/>
    <property type="match status" value="1"/>
</dbReference>
<dbReference type="PROSITE" id="PS50011">
    <property type="entry name" value="PROTEIN_KINASE_DOM"/>
    <property type="match status" value="1"/>
</dbReference>
<dbReference type="PROSITE" id="PS00109">
    <property type="entry name" value="PROTEIN_KINASE_TYR"/>
    <property type="match status" value="1"/>
</dbReference>
<gene>
    <name type="primary">TYRO3</name>
    <name type="synonym">REK</name>
</gene>
<accession>Q98949</accession>
<organism>
    <name type="scientific">Gallus gallus</name>
    <name type="common">Chicken</name>
    <dbReference type="NCBI Taxonomy" id="9031"/>
    <lineage>
        <taxon>Eukaryota</taxon>
        <taxon>Metazoa</taxon>
        <taxon>Chordata</taxon>
        <taxon>Craniata</taxon>
        <taxon>Vertebrata</taxon>
        <taxon>Euteleostomi</taxon>
        <taxon>Archelosauria</taxon>
        <taxon>Archosauria</taxon>
        <taxon>Dinosauria</taxon>
        <taxon>Saurischia</taxon>
        <taxon>Theropoda</taxon>
        <taxon>Coelurosauria</taxon>
        <taxon>Aves</taxon>
        <taxon>Neognathae</taxon>
        <taxon>Galloanserae</taxon>
        <taxon>Galliformes</taxon>
        <taxon>Phasianidae</taxon>
        <taxon>Phasianinae</taxon>
        <taxon>Gallus</taxon>
    </lineage>
</organism>
<reference key="1">
    <citation type="journal article" date="1996" name="J. Biol. Chem.">
        <title>Rek, a gene expressed in retina and brain, encodes a receptor tyrosine kinase of the Axl/Tyro3 family.</title>
        <authorList>
            <person name="Biscardi J.S."/>
            <person name="Denhez F."/>
            <person name="Buehler G.F."/>
            <person name="Chesnutt D.A."/>
            <person name="Baragona S.C."/>
            <person name="O'Bryan J.P."/>
            <person name="Der C.J."/>
            <person name="Fiordalisi J.J."/>
            <person name="Fults D.W."/>
            <person name="Maness P.F."/>
        </authorList>
    </citation>
    <scope>NUCLEOTIDE SEQUENCE [MRNA]</scope>
    <scope>PHOSPHORYLATION</scope>
    <scope>TISSUE SPECIFICITY</scope>
    <source>
        <tissue>Embryonic brain</tissue>
    </source>
</reference>
<comment type="function">
    <text evidence="1">Receptor tyrosine kinase that transduces signals from the extracellular matrix into the cytoplasm by binding to several ligands. Regulates many physiological processes including cell survival, migration and differentiation. Ligand binding at the cell surface induces dimerization and autophosphorylation of TYRO3 on its intracellular domain that provides docking sites for downstream signaling molecules. Following activation by ligand, enhances PI3-kinase activity and activates the AKT survival pathway, including nuclear translocation of NF-kappa-B and up-regulation of transcription of NF-kappa-B-regulated genes (By similarity).</text>
</comment>
<comment type="catalytic activity">
    <reaction evidence="6">
        <text>L-tyrosyl-[protein] + ATP = O-phospho-L-tyrosyl-[protein] + ADP + H(+)</text>
        <dbReference type="Rhea" id="RHEA:10596"/>
        <dbReference type="Rhea" id="RHEA-COMP:10136"/>
        <dbReference type="Rhea" id="RHEA-COMP:20101"/>
        <dbReference type="ChEBI" id="CHEBI:15378"/>
        <dbReference type="ChEBI" id="CHEBI:30616"/>
        <dbReference type="ChEBI" id="CHEBI:46858"/>
        <dbReference type="ChEBI" id="CHEBI:61978"/>
        <dbReference type="ChEBI" id="CHEBI:456216"/>
        <dbReference type="EC" id="2.7.10.1"/>
    </reaction>
</comment>
<comment type="subcellular location">
    <subcellularLocation>
        <location evidence="1">Cell membrane</location>
        <topology evidence="1">Single-pass type I membrane protein</topology>
    </subcellularLocation>
</comment>
<comment type="tissue specificity">
    <text evidence="8">Detected in embryonic retina (at protein level). detected in brain, retina, kidney and in retinal Mueller glia-like cells.</text>
</comment>
<comment type="PTM">
    <text evidence="8">Autophosphorylated on tyrosine residues.</text>
</comment>
<comment type="similarity">
    <text evidence="4">Belongs to the protein kinase superfamily. Tyr protein kinase family. AXL/UFO subfamily.</text>
</comment>
<keyword id="KW-0067">ATP-binding</keyword>
<keyword id="KW-0130">Cell adhesion</keyword>
<keyword id="KW-1003">Cell membrane</keyword>
<keyword id="KW-1015">Disulfide bond</keyword>
<keyword id="KW-0325">Glycoprotein</keyword>
<keyword id="KW-0393">Immunoglobulin domain</keyword>
<keyword id="KW-0418">Kinase</keyword>
<keyword id="KW-0472">Membrane</keyword>
<keyword id="KW-0547">Nucleotide-binding</keyword>
<keyword id="KW-0597">Phosphoprotein</keyword>
<keyword id="KW-0675">Receptor</keyword>
<keyword id="KW-1185">Reference proteome</keyword>
<keyword id="KW-0677">Repeat</keyword>
<keyword id="KW-0732">Signal</keyword>
<keyword id="KW-0808">Transferase</keyword>
<keyword id="KW-0812">Transmembrane</keyword>
<keyword id="KW-1133">Transmembrane helix</keyword>
<keyword id="KW-0829">Tyrosine-protein kinase</keyword>
<feature type="signal peptide" evidence="2">
    <location>
        <begin position="1"/>
        <end position="28"/>
    </location>
</feature>
<feature type="chain" id="PRO_0000346114" description="Tyrosine-protein kinase receptor TYRO3">
    <location>
        <begin position="29"/>
        <end position="873"/>
    </location>
</feature>
<feature type="topological domain" description="Extracellular" evidence="2">
    <location>
        <begin position="29"/>
        <end position="416"/>
    </location>
</feature>
<feature type="transmembrane region" description="Helical" evidence="2">
    <location>
        <begin position="417"/>
        <end position="437"/>
    </location>
</feature>
<feature type="topological domain" description="Cytoplasmic" evidence="2">
    <location>
        <begin position="438"/>
        <end position="873"/>
    </location>
</feature>
<feature type="domain" description="Ig-like C2-type 1">
    <location>
        <begin position="29"/>
        <end position="116"/>
    </location>
</feature>
<feature type="domain" description="Ig-like C2-type 2">
    <location>
        <begin position="127"/>
        <end position="208"/>
    </location>
</feature>
<feature type="domain" description="Fibronectin type-III 1" evidence="5">
    <location>
        <begin position="215"/>
        <end position="308"/>
    </location>
</feature>
<feature type="domain" description="Fibronectin type-III 2" evidence="5">
    <location>
        <begin position="310"/>
        <end position="403"/>
    </location>
</feature>
<feature type="domain" description="Protein kinase" evidence="4">
    <location>
        <begin position="505"/>
        <end position="776"/>
    </location>
</feature>
<feature type="region of interest" description="Disordered" evidence="7">
    <location>
        <begin position="845"/>
        <end position="873"/>
    </location>
</feature>
<feature type="compositionally biased region" description="Basic and acidic residues" evidence="7">
    <location>
        <begin position="847"/>
        <end position="858"/>
    </location>
</feature>
<feature type="active site" description="Proton acceptor" evidence="4 6">
    <location>
        <position position="642"/>
    </location>
</feature>
<feature type="binding site" evidence="4">
    <location>
        <begin position="511"/>
        <end position="519"/>
    </location>
    <ligand>
        <name>ATP</name>
        <dbReference type="ChEBI" id="CHEBI:30616"/>
    </ligand>
</feature>
<feature type="binding site" evidence="4">
    <location>
        <position position="537"/>
    </location>
    <ligand>
        <name>ATP</name>
        <dbReference type="ChEBI" id="CHEBI:30616"/>
    </ligand>
</feature>
<feature type="modified residue" description="Phosphotyrosine; by autocatalysis" evidence="1">
    <location>
        <position position="673"/>
    </location>
</feature>
<feature type="glycosylation site" description="N-linked (GlcNAc...) asparagine" evidence="2">
    <location>
        <position position="51"/>
    </location>
</feature>
<feature type="glycosylation site" description="N-linked (GlcNAc...) asparagine" evidence="2">
    <location>
        <position position="179"/>
    </location>
</feature>
<feature type="glycosylation site" description="N-linked (GlcNAc...) asparagine" evidence="2">
    <location>
        <position position="184"/>
    </location>
</feature>
<feature type="glycosylation site" description="N-linked (GlcNAc...) asparagine" evidence="2">
    <location>
        <position position="218"/>
    </location>
</feature>
<feature type="glycosylation site" description="N-linked (GlcNAc...) asparagine" evidence="2">
    <location>
        <position position="228"/>
    </location>
</feature>
<feature type="glycosylation site" description="N-linked (GlcNAc...) asparagine" evidence="2">
    <location>
        <position position="281"/>
    </location>
</feature>
<feature type="glycosylation site" description="N-linked (GlcNAc...) asparagine" evidence="2">
    <location>
        <position position="353"/>
    </location>
</feature>
<feature type="glycosylation site" description="N-linked (GlcNAc...) asparagine" evidence="2">
    <location>
        <position position="367"/>
    </location>
</feature>
<feature type="disulfide bond" evidence="3">
    <location>
        <begin position="52"/>
        <end position="105"/>
    </location>
</feature>
<feature type="disulfide bond" evidence="3">
    <location>
        <begin position="148"/>
        <end position="191"/>
    </location>
</feature>
<sequence length="873" mass="96402">MELRRSMALPRLLLLGLWAAALRDGAVAAGMKFTGSPIKLKVSQGQPVKLNCSLEGMEDPEMLWIKDGAVVQSVDQVYIPVDEDHWIGFLSLKSVERTDSGKYWCQVENGGKKEESQQVWLIVEGVPYFTVEPEDVSVSPNAPFHMACAAVGPPEPVTIVWWMGDSRVGLPDISPSILNVSGINQSTMFSCEAHNVKGLSSSRTATVQIKAMPLPPLNVTVSQVTSSNASVVWVPGFDGRAPLHSCTLQVAESPDGQEVSTEVAPVPPFAYGVQGLKHSTNYSVRVQCSNEMGSSPFTERVYFQTLELAPSSTPQNIHVIQRDPGLVLEWEGVAPDVLKENVLGYRLEWIQDNVTQGEMIVQDTKANLTTWNPLKDLIIRVCVLNSAGCGPWSDLFLLEAQEVMGGQRQPPYGTSWVPVALGILTALVTAVALALILLRKRRKETRFGHAFGSVVGRGDPAVHFRAARSFNREGPELIEATLESVGISDELKTKLKDVLIQEQQFTLGRMLGKGEFGSVREALLKLDDGSFQKVAVKMLKADIFTSTDIEEFLREAACMKEFDHPHVTKLIGVSLRSRPKGRLPIPMVILPFMKHGDLHAFLLMSRIGENPFNLPLQTLLKFMIDIASGMEYLSSKNFIHRDLAARNCMLDENMNVSVADFGLSKKIYSGDYYRQGCASKLPVKWLALESLADNLYTTHSDVWAFGVTMWEIVTRGQTPYAGIENAEIYNYLISGNRLKQPPECLEDVYDLMCRCWHPEPKLRPSFGVLRSQLEMIRGRMSTLSLSQDPLYVNIGKDKESSVSDPAVHTSFGNTDGDETIAGAAAAAITSDYRYIMSPLCLGDDVEGERHPEGQEGENKSLLYELETEGEKSC</sequence>